<reference key="1">
    <citation type="journal article" date="2008" name="Chem. Biol. Interact.">
        <title>Extending the Bacillus cereus group genomics to putative food-borne pathogens of different toxicity.</title>
        <authorList>
            <person name="Lapidus A."/>
            <person name="Goltsman E."/>
            <person name="Auger S."/>
            <person name="Galleron N."/>
            <person name="Segurens B."/>
            <person name="Dossat C."/>
            <person name="Land M.L."/>
            <person name="Broussolle V."/>
            <person name="Brillard J."/>
            <person name="Guinebretiere M.-H."/>
            <person name="Sanchis V."/>
            <person name="Nguen-the C."/>
            <person name="Lereclus D."/>
            <person name="Richardson P."/>
            <person name="Wincker P."/>
            <person name="Weissenbach J."/>
            <person name="Ehrlich S.D."/>
            <person name="Sorokin A."/>
        </authorList>
    </citation>
    <scope>NUCLEOTIDE SEQUENCE [LARGE SCALE GENOMIC DNA]</scope>
    <source>
        <strain>KBAB4</strain>
    </source>
</reference>
<sequence>MEFVFLGTGAGVPSKGRNVSAIALQLLEERGQTWLFDCGEATQHQILHTSVRPRRIEKIFITHLHGDHIFGLPGLLGSRSFQGGTTKLTVYGPKGIKQFIEVALLVSTTHVKYPLEIVEITEEGIVFEDNEFCVETKRLSHGIECFGYRIVEKDIQGALLVDKLLGMGVKPGPVFKRLKDGEVVELENGTVLDGKDFIGPPQKGRVITILGDTRYCEASRELAQDADVLVHEATFAAEDEQQAYDYFHSTSKQAASIALQANAKRLILTHISSRYQGDTYKELLKEARELFSNTEIATDLKSFPVER</sequence>
<dbReference type="EC" id="3.1.26.11" evidence="1"/>
<dbReference type="EMBL" id="CP000903">
    <property type="protein sequence ID" value="ABY45139.1"/>
    <property type="molecule type" value="Genomic_DNA"/>
</dbReference>
<dbReference type="RefSeq" id="WP_002014952.1">
    <property type="nucleotide sequence ID" value="NC_010184.1"/>
</dbReference>
<dbReference type="SMR" id="A9VG79"/>
<dbReference type="KEGG" id="bwe:BcerKBAB4_3973"/>
<dbReference type="eggNOG" id="COG1234">
    <property type="taxonomic scope" value="Bacteria"/>
</dbReference>
<dbReference type="HOGENOM" id="CLU_031317_2_0_9"/>
<dbReference type="Proteomes" id="UP000002154">
    <property type="component" value="Chromosome"/>
</dbReference>
<dbReference type="GO" id="GO:0042781">
    <property type="term" value="F:3'-tRNA processing endoribonuclease activity"/>
    <property type="evidence" value="ECO:0007669"/>
    <property type="project" value="UniProtKB-UniRule"/>
</dbReference>
<dbReference type="GO" id="GO:0008270">
    <property type="term" value="F:zinc ion binding"/>
    <property type="evidence" value="ECO:0007669"/>
    <property type="project" value="UniProtKB-UniRule"/>
</dbReference>
<dbReference type="CDD" id="cd07717">
    <property type="entry name" value="RNaseZ_ZiPD-like_MBL-fold"/>
    <property type="match status" value="1"/>
</dbReference>
<dbReference type="FunFam" id="3.60.15.10:FF:000002">
    <property type="entry name" value="Ribonuclease Z"/>
    <property type="match status" value="1"/>
</dbReference>
<dbReference type="Gene3D" id="3.60.15.10">
    <property type="entry name" value="Ribonuclease Z/Hydroxyacylglutathione hydrolase-like"/>
    <property type="match status" value="1"/>
</dbReference>
<dbReference type="HAMAP" id="MF_01818">
    <property type="entry name" value="RNase_Z_BN"/>
    <property type="match status" value="1"/>
</dbReference>
<dbReference type="InterPro" id="IPR001279">
    <property type="entry name" value="Metallo-B-lactamas"/>
</dbReference>
<dbReference type="InterPro" id="IPR036866">
    <property type="entry name" value="RibonucZ/Hydroxyglut_hydro"/>
</dbReference>
<dbReference type="InterPro" id="IPR013471">
    <property type="entry name" value="RNase_Z/BN"/>
</dbReference>
<dbReference type="NCBIfam" id="NF000801">
    <property type="entry name" value="PRK00055.1-3"/>
    <property type="match status" value="1"/>
</dbReference>
<dbReference type="NCBIfam" id="TIGR02651">
    <property type="entry name" value="RNase_Z"/>
    <property type="match status" value="1"/>
</dbReference>
<dbReference type="PANTHER" id="PTHR46018">
    <property type="entry name" value="ZINC PHOSPHODIESTERASE ELAC PROTEIN 1"/>
    <property type="match status" value="1"/>
</dbReference>
<dbReference type="PANTHER" id="PTHR46018:SF2">
    <property type="entry name" value="ZINC PHOSPHODIESTERASE ELAC PROTEIN 1"/>
    <property type="match status" value="1"/>
</dbReference>
<dbReference type="Pfam" id="PF00753">
    <property type="entry name" value="Lactamase_B"/>
    <property type="match status" value="1"/>
</dbReference>
<dbReference type="Pfam" id="PF12706">
    <property type="entry name" value="Lactamase_B_2"/>
    <property type="match status" value="1"/>
</dbReference>
<dbReference type="SMART" id="SM00849">
    <property type="entry name" value="Lactamase_B"/>
    <property type="match status" value="1"/>
</dbReference>
<dbReference type="SUPFAM" id="SSF56281">
    <property type="entry name" value="Metallo-hydrolase/oxidoreductase"/>
    <property type="match status" value="1"/>
</dbReference>
<proteinExistence type="inferred from homology"/>
<name>RNZ_BACMK</name>
<gene>
    <name evidence="1" type="primary">rnz</name>
    <name type="ordered locus">BcerKBAB4_3973</name>
</gene>
<protein>
    <recommendedName>
        <fullName evidence="1">Ribonuclease Z</fullName>
        <shortName evidence="1">RNase Z</shortName>
        <ecNumber evidence="1">3.1.26.11</ecNumber>
    </recommendedName>
    <alternativeName>
        <fullName evidence="1">tRNA 3 endonuclease</fullName>
    </alternativeName>
    <alternativeName>
        <fullName evidence="1">tRNase Z</fullName>
    </alternativeName>
</protein>
<keyword id="KW-0255">Endonuclease</keyword>
<keyword id="KW-0378">Hydrolase</keyword>
<keyword id="KW-0479">Metal-binding</keyword>
<keyword id="KW-0540">Nuclease</keyword>
<keyword id="KW-0819">tRNA processing</keyword>
<keyword id="KW-0862">Zinc</keyword>
<evidence type="ECO:0000255" key="1">
    <source>
        <dbReference type="HAMAP-Rule" id="MF_01818"/>
    </source>
</evidence>
<feature type="chain" id="PRO_1000187936" description="Ribonuclease Z">
    <location>
        <begin position="1"/>
        <end position="307"/>
    </location>
</feature>
<feature type="active site" description="Proton acceptor" evidence="1">
    <location>
        <position position="67"/>
    </location>
</feature>
<feature type="binding site" evidence="1">
    <location>
        <position position="63"/>
    </location>
    <ligand>
        <name>Zn(2+)</name>
        <dbReference type="ChEBI" id="CHEBI:29105"/>
        <label>1</label>
        <note>catalytic</note>
    </ligand>
</feature>
<feature type="binding site" evidence="1">
    <location>
        <position position="65"/>
    </location>
    <ligand>
        <name>Zn(2+)</name>
        <dbReference type="ChEBI" id="CHEBI:29105"/>
        <label>1</label>
        <note>catalytic</note>
    </ligand>
</feature>
<feature type="binding site" evidence="1">
    <location>
        <position position="67"/>
    </location>
    <ligand>
        <name>Zn(2+)</name>
        <dbReference type="ChEBI" id="CHEBI:29105"/>
        <label>2</label>
        <note>catalytic</note>
    </ligand>
</feature>
<feature type="binding site" evidence="1">
    <location>
        <position position="68"/>
    </location>
    <ligand>
        <name>Zn(2+)</name>
        <dbReference type="ChEBI" id="CHEBI:29105"/>
        <label>2</label>
        <note>catalytic</note>
    </ligand>
</feature>
<feature type="binding site" evidence="1">
    <location>
        <position position="141"/>
    </location>
    <ligand>
        <name>Zn(2+)</name>
        <dbReference type="ChEBI" id="CHEBI:29105"/>
        <label>1</label>
        <note>catalytic</note>
    </ligand>
</feature>
<feature type="binding site" evidence="1">
    <location>
        <position position="212"/>
    </location>
    <ligand>
        <name>Zn(2+)</name>
        <dbReference type="ChEBI" id="CHEBI:29105"/>
        <label>1</label>
        <note>catalytic</note>
    </ligand>
</feature>
<feature type="binding site" evidence="1">
    <location>
        <position position="212"/>
    </location>
    <ligand>
        <name>Zn(2+)</name>
        <dbReference type="ChEBI" id="CHEBI:29105"/>
        <label>2</label>
        <note>catalytic</note>
    </ligand>
</feature>
<feature type="binding site" evidence="1">
    <location>
        <position position="270"/>
    </location>
    <ligand>
        <name>Zn(2+)</name>
        <dbReference type="ChEBI" id="CHEBI:29105"/>
        <label>2</label>
        <note>catalytic</note>
    </ligand>
</feature>
<comment type="function">
    <text evidence="1">Zinc phosphodiesterase, which displays some tRNA 3'-processing endonuclease activity. Probably involved in tRNA maturation, by removing a 3'-trailer from precursor tRNA.</text>
</comment>
<comment type="catalytic activity">
    <reaction evidence="1">
        <text>Endonucleolytic cleavage of RNA, removing extra 3' nucleotides from tRNA precursor, generating 3' termini of tRNAs. A 3'-hydroxy group is left at the tRNA terminus and a 5'-phosphoryl group is left at the trailer molecule.</text>
        <dbReference type="EC" id="3.1.26.11"/>
    </reaction>
</comment>
<comment type="cofactor">
    <cofactor evidence="1">
        <name>Zn(2+)</name>
        <dbReference type="ChEBI" id="CHEBI:29105"/>
    </cofactor>
    <text evidence="1">Binds 2 Zn(2+) ions.</text>
</comment>
<comment type="subunit">
    <text evidence="1">Homodimer.</text>
</comment>
<comment type="similarity">
    <text evidence="1">Belongs to the RNase Z family.</text>
</comment>
<organism>
    <name type="scientific">Bacillus mycoides (strain KBAB4)</name>
    <name type="common">Bacillus weihenstephanensis</name>
    <dbReference type="NCBI Taxonomy" id="315730"/>
    <lineage>
        <taxon>Bacteria</taxon>
        <taxon>Bacillati</taxon>
        <taxon>Bacillota</taxon>
        <taxon>Bacilli</taxon>
        <taxon>Bacillales</taxon>
        <taxon>Bacillaceae</taxon>
        <taxon>Bacillus</taxon>
        <taxon>Bacillus cereus group</taxon>
    </lineage>
</organism>
<accession>A9VG79</accession>